<comment type="function">
    <text evidence="2 7">Muscle-specific filamin, which plays a central role in sarcomere assembly and organization (By similarity). Critical for normal myogenesis, it probably functions as a large actin-cross-linking protein with structural functions at the Z lines in muscle cells. May be involved in reorganizing the actin cytoskeleton in response to signaling events (PubMed:16914736).</text>
</comment>
<comment type="subunit">
    <text evidence="1 2">Homodimer; the filamin repeat 24 and the second hinge domain are important for dimer formation (By similarity). Interacts with FLNB, INPPL1, ITGB1A, KCND2, MYOT, MYOZ1 and MYOZ3. Interacts with sarcoglycans SGCD and SGCG. Interacts (via filament repeats 17-18, 20-21 and 24) with USP25 (isoform USP25m only). Interacts with FBLIM1 (By similarity). Interacts with XIRP1; this interaction is mediated by filamin 20 repeat (By similarity). Interacts with KY. Interacts with IGFN1. Interacts with MICALL2. Interacts with ANK3. Interacts with MICALL2 (By similarity). Interacts with ANK3. Interacts with SYNPO2 (By similarity).</text>
</comment>
<comment type="subcellular location">
    <subcellularLocation>
        <location evidence="1">Cytoplasm</location>
    </subcellularLocation>
    <subcellularLocation>
        <location evidence="1">Membrane</location>
        <topology evidence="1">Peripheral membrane protein</topology>
    </subcellularLocation>
    <subcellularLocation>
        <location evidence="1">Cytoplasm</location>
        <location evidence="1">Cytoskeleton</location>
    </subcellularLocation>
    <subcellularLocation>
        <location evidence="1">Cytoplasm</location>
        <location evidence="1">Myofibril</location>
        <location evidence="1">Sarcomere</location>
        <location evidence="1">Z line</location>
    </subcellularLocation>
    <text evidence="1">A small amount localizes at membranes. In striated muscle cells, it predominantly localizes in myofibrillar Z lines, while a minor fraction localizes with subsarcolemme (By similarity). Targeting to developing and mature Z lines is mediated by the intradomain insert (By similarity).</text>
</comment>
<comment type="alternative products">
    <event type="alternative splicing"/>
    <isoform>
        <id>Q8VHX6-1</id>
        <name>1</name>
        <name>H1</name>
        <sequence type="displayed"/>
    </isoform>
    <isoform>
        <id>Q8VHX6-2</id>
        <name>2</name>
        <name>Delta-H1</name>
        <sequence type="described" ref="VSP_007580"/>
    </isoform>
</comment>
<comment type="developmental stage">
    <text evidence="6">During myogenesis, isoform 1 is expressed the first day, then is replaced by isoform 2.</text>
</comment>
<comment type="PTM">
    <text evidence="1">Ubiquitinated by FBXL22, leading to proteasomal degradation.</text>
</comment>
<comment type="similarity">
    <text evidence="10">Belongs to the filamin family.</text>
</comment>
<keyword id="KW-0009">Actin-binding</keyword>
<keyword id="KW-0025">Alternative splicing</keyword>
<keyword id="KW-0963">Cytoplasm</keyword>
<keyword id="KW-0206">Cytoskeleton</keyword>
<keyword id="KW-0472">Membrane</keyword>
<keyword id="KW-0488">Methylation</keyword>
<keyword id="KW-0597">Phosphoprotein</keyword>
<keyword id="KW-1185">Reference proteome</keyword>
<keyword id="KW-0677">Repeat</keyword>
<keyword id="KW-0832">Ubl conjugation</keyword>
<feature type="chain" id="PRO_0000087302" description="Filamin-C">
    <location>
        <begin position="1"/>
        <end position="2726"/>
    </location>
</feature>
<feature type="domain" description="Calponin-homology (CH) 1" evidence="3">
    <location>
        <begin position="37"/>
        <end position="143"/>
    </location>
</feature>
<feature type="domain" description="Calponin-homology (CH) 2" evidence="3">
    <location>
        <begin position="160"/>
        <end position="263"/>
    </location>
</feature>
<feature type="repeat" description="Filamin 1">
    <location>
        <begin position="271"/>
        <end position="369"/>
    </location>
</feature>
<feature type="repeat" description="Filamin 2">
    <location>
        <begin position="371"/>
        <end position="469"/>
    </location>
</feature>
<feature type="repeat" description="Filamin 3">
    <location>
        <begin position="470"/>
        <end position="566"/>
    </location>
</feature>
<feature type="repeat" description="Filamin 4">
    <location>
        <begin position="567"/>
        <end position="659"/>
    </location>
</feature>
<feature type="repeat" description="Filamin 5">
    <location>
        <begin position="663"/>
        <end position="759"/>
    </location>
</feature>
<feature type="repeat" description="Filamin 6">
    <location>
        <begin position="760"/>
        <end position="862"/>
    </location>
</feature>
<feature type="repeat" description="Filamin 7">
    <location>
        <begin position="863"/>
        <end position="961"/>
    </location>
</feature>
<feature type="repeat" description="Filamin 8">
    <location>
        <begin position="962"/>
        <end position="1057"/>
    </location>
</feature>
<feature type="repeat" description="Filamin 9">
    <location>
        <begin position="1058"/>
        <end position="1150"/>
    </location>
</feature>
<feature type="repeat" description="Filamin 10">
    <location>
        <begin position="1151"/>
        <end position="1245"/>
    </location>
</feature>
<feature type="repeat" description="Filamin 11">
    <location>
        <begin position="1246"/>
        <end position="1345"/>
    </location>
</feature>
<feature type="repeat" description="Filamin 12">
    <location>
        <begin position="1346"/>
        <end position="1438"/>
    </location>
</feature>
<feature type="repeat" description="Filamin 13">
    <location>
        <begin position="1439"/>
        <end position="1534"/>
    </location>
</feature>
<feature type="repeat" description="Filamin 14">
    <location>
        <begin position="1535"/>
        <end position="1631"/>
    </location>
</feature>
<feature type="repeat" description="Filamin 15">
    <location>
        <begin position="1636"/>
        <end position="1735"/>
    </location>
</feature>
<feature type="repeat" description="Filamin 16">
    <location>
        <begin position="1760"/>
        <end position="1855"/>
    </location>
</feature>
<feature type="repeat" description="Filamin 17">
    <location>
        <begin position="1856"/>
        <end position="1947"/>
    </location>
</feature>
<feature type="repeat" description="Filamin 18">
    <location>
        <begin position="1948"/>
        <end position="2034"/>
    </location>
</feature>
<feature type="repeat" description="Filamin 19">
    <location>
        <begin position="2037"/>
        <end position="2129"/>
    </location>
</feature>
<feature type="repeat" description="Filamin 20; mediates interaction with XIRP1" evidence="4">
    <location>
        <begin position="2212"/>
        <end position="2307"/>
    </location>
</feature>
<feature type="repeat" description="Filamin 21">
    <location>
        <begin position="2310"/>
        <end position="2402"/>
    </location>
</feature>
<feature type="repeat" description="Filamin 22">
    <location>
        <begin position="2404"/>
        <end position="2497"/>
    </location>
</feature>
<feature type="repeat" description="Filamin 23">
    <location>
        <begin position="2501"/>
        <end position="2593"/>
    </location>
</feature>
<feature type="repeat" description="Filamin 24">
    <location>
        <begin position="2631"/>
        <end position="2725"/>
    </location>
</feature>
<feature type="region of interest" description="Actin-binding">
    <location>
        <begin position="1"/>
        <end position="260"/>
    </location>
</feature>
<feature type="region of interest" description="Hinge 1">
    <location>
        <begin position="1736"/>
        <end position="1759"/>
    </location>
</feature>
<feature type="region of interest" description="Intradomain insert; mediate targeting to Z lines" evidence="1">
    <location>
        <begin position="2163"/>
        <end position="2244"/>
    </location>
</feature>
<feature type="region of interest" description="Disordered" evidence="5">
    <location>
        <begin position="2193"/>
        <end position="2214"/>
    </location>
</feature>
<feature type="region of interest" description="Disordered" evidence="5">
    <location>
        <begin position="2241"/>
        <end position="2261"/>
    </location>
</feature>
<feature type="region of interest" description="Interaction with INPPL1" evidence="1">
    <location>
        <begin position="2404"/>
        <end position="2725"/>
    </location>
</feature>
<feature type="region of interest" description="Self-association site, tail" evidence="1">
    <location>
        <begin position="2594"/>
        <end position="2726"/>
    </location>
</feature>
<feature type="region of interest" description="Hinge 2">
    <location>
        <begin position="2594"/>
        <end position="2630"/>
    </location>
</feature>
<feature type="compositionally biased region" description="Basic and acidic residues" evidence="5">
    <location>
        <begin position="2193"/>
        <end position="2210"/>
    </location>
</feature>
<feature type="compositionally biased region" description="Polar residues" evidence="5">
    <location>
        <begin position="2241"/>
        <end position="2260"/>
    </location>
</feature>
<feature type="modified residue" description="Phosphoserine" evidence="2">
    <location>
        <position position="5"/>
    </location>
</feature>
<feature type="modified residue" description="Omega-N-methylarginine" evidence="12">
    <location>
        <position position="1003"/>
    </location>
</feature>
<feature type="modified residue" description="Phosphoserine" evidence="2">
    <location>
        <position position="1162"/>
    </location>
</feature>
<feature type="modified residue" description="Phosphoserine" evidence="2">
    <location>
        <position position="1339"/>
    </location>
</feature>
<feature type="modified residue" description="Phosphoserine" evidence="2">
    <location>
        <position position="2043"/>
    </location>
</feature>
<feature type="modified residue" description="Phosphoserine" evidence="11">
    <location>
        <position position="2234"/>
    </location>
</feature>
<feature type="modified residue" description="Phosphoserine" evidence="2">
    <location>
        <position position="2237"/>
    </location>
</feature>
<feature type="modified residue" description="Phosphothreonine" evidence="2">
    <location>
        <position position="2239"/>
    </location>
</feature>
<feature type="modified residue" description="Phosphoserine" evidence="2">
    <location>
        <position position="2587"/>
    </location>
</feature>
<feature type="modified residue" description="Phosphoserine" evidence="2">
    <location>
        <position position="2618"/>
    </location>
</feature>
<feature type="modified residue" description="Phosphoserine" evidence="2">
    <location>
        <position position="2621"/>
    </location>
</feature>
<feature type="modified residue" description="Phosphoserine" evidence="2">
    <location>
        <position position="2633"/>
    </location>
</feature>
<feature type="modified residue" description="Phosphoserine" evidence="2">
    <location>
        <position position="2715"/>
    </location>
</feature>
<feature type="modified residue" description="Phosphoserine" evidence="2">
    <location>
        <position position="2719"/>
    </location>
</feature>
<feature type="splice variant" id="VSP_007580" description="In isoform 2." evidence="8 9">
    <location>
        <begin position="1735"/>
        <end position="1767"/>
    </location>
</feature>
<feature type="sequence conflict" description="In Ref. 2; AAI51098." evidence="10" ref="2">
    <original>C</original>
    <variation>R</variation>
    <location>
        <position position="1406"/>
    </location>
</feature>
<feature type="sequence conflict" description="In Ref. 4; AAF97411." evidence="10" ref="4">
    <original>E</original>
    <variation>Q</variation>
    <location>
        <position position="2606"/>
    </location>
</feature>
<feature type="sequence conflict" description="In Ref. 4; AAF97411." evidence="10" ref="4">
    <original>T</original>
    <variation>S</variation>
    <location>
        <position position="2609"/>
    </location>
</feature>
<feature type="sequence conflict" description="In Ref. 4; AAF97411." evidence="10" ref="4">
    <original>K</original>
    <variation>H</variation>
    <location>
        <position position="2617"/>
    </location>
</feature>
<feature type="sequence conflict" description="In Ref. 4; AAF97411." evidence="10" ref="4">
    <original>K</original>
    <variation>N</variation>
    <location>
        <position position="2631"/>
    </location>
</feature>
<feature type="sequence conflict" description="In Ref. 4; AAF97411." evidence="10" ref="4">
    <original>KAG</original>
    <variation>QAR</variation>
    <location>
        <begin position="2663"/>
        <end position="2665"/>
    </location>
</feature>
<feature type="sequence conflict" description="In Ref. 4; AAF97411." evidence="10" ref="4">
    <original>M</original>
    <variation>I</variation>
    <location>
        <position position="2669"/>
    </location>
</feature>
<feature type="sequence conflict" description="In Ref. 4; AAF97411." evidence="10" ref="4">
    <original>V</original>
    <variation>F</variation>
    <location>
        <position position="2695"/>
    </location>
</feature>
<accession>Q8VHX6</accession>
<accession>B2RY80</accession>
<accession>B9EKT2</accession>
<accession>Q6PAI6</accession>
<accession>Q9JJ38</accession>
<protein>
    <recommendedName>
        <fullName>Filamin-C</fullName>
        <shortName>FLN-C</shortName>
    </recommendedName>
    <alternativeName>
        <fullName>ABP-280-like protein</fullName>
    </alternativeName>
    <alternativeName>
        <fullName>ABP-L</fullName>
    </alternativeName>
    <alternativeName>
        <fullName>Actin-binding-like protein</fullName>
    </alternativeName>
    <alternativeName>
        <fullName>Filamin-2</fullName>
    </alternativeName>
    <alternativeName>
        <fullName>Gamma-filamin</fullName>
    </alternativeName>
</protein>
<proteinExistence type="evidence at protein level"/>
<name>FLNC_MOUSE</name>
<sequence>MMNNSNYSDASGLGLVDEADEMPSTEKDLAEDAPWKKIQQNTFTRWCNEHLKCVGKRLTDLQRDLSDGLRLIALLEVLSQKRMYRKFHPRPNFRQMKLENVSVALEFLEREHIKLVSIDSKAIVDGNLKLILGLIWTLILHYSISMPMWEDEDDEDARKQTPKQRLLGWIQNKVPQLPITNFNRDWQDGKALGALVDNCAPGLCPDWEAWDPNQPVQNAREAMQQADDWLGVPQVIAPEEIVDPNVDEHSVMTYLSQFPKAKLKPGAPVRSKQLNPKKAIAYGPGIEPQGNTVLQPAHFTVQTVDAGVGEVLVYIEDPEGHTEEAKVVPNNDKDRTYAVSYVPKVAGLHKVTVLFAGQNIERSPFEVNVGMALGDANKVSARGPGLEPVGNVANKPTYFDIYTAGAGTGDVAVVIVDPQGRRDTVEVALEDKGDNTFRCTYRPVMEGPHTVHVAFAGAPITRSPFPVHVAEACNPNACRASGRGLQPKGVRVKEVADFKVFTKGAGSGELKVTVKGPKGTEEPVKVREAGDGVFECEYYPVVPGKYVVTITWGGYAIPRSPFEVQVSPEAGAQKVRAWGPGLETGQVGKSADFVVEAIGTEVGTLGFSIEGPSQAKIECDDKGDGSCDVRYWPTEPGEYAVHVICDDEDIRDSPFIAHIQPAPPDCFPDKVKAFGPGLEPTGCIVDRPAEFTIDARAAGKGDLKLYAQDADGCPIDIKVIPNGDGTFRCSYVPTKPIKHTIIVSWGGVNVPKSPFRVNVGEGSHPERVKVYGPGVEKTGLKANEPTYFTVDCSEAGQGDVSIGIKCAPGVVGPVEADIDFDIIKNDNDTFTVKYTPPGAGHYTIMVLFANQEIPASPFHIKVDPSHDASKVKAEGPGLSRTGVEVGKPTHFTVLTKGAGKAKLDVHFAGAAKGEAVRDFEIIDNHDYSYTVKYTAVQQGNMAVTVTYGGDPVPKSPFVVNVAPPLDLSKVKVQGLNSKVAVGQEQAFSVNTRGAGGQGQLDVRMTSPSRRPIPCKLEPGGGAEAQAVRYMPPEEGPYKVDITYDGHPVPGSPFAVEGVLPPDPSKVCAYGPGLKGGLVGTPAPFSIDTKGAGTGGLGLTVEGPCEAKIECQDNGDGSCAVSYLPTEPGEYTINILFAEAHIPGSPFKATIQPVFDPSKVRASGPGLERGKAGEAATFTVDCSEAGEAELTIEILSDAGVKAEVLIQNNADGTYHITYSPAFPGTYTITIKYGGHPIPKFPTRVHVQPAVDTSGIKVSGPGVEPHGVLREVTTEFTVDARSLTATGGNHVTARVLNPSGAKTDTYVTDNGDGTYRVQYTAYEEGVHLVEVLYDEVAVPKSPFRVGVTEGCDPTRVRAFGPGLEGGLVNKANRFTVETRGAGTGGLGLAIEGPSEAKMSCKDNKDGSCTVEYIPFTPGDYDVNITFGGQPIPGSPFRVPVKDVVDPGKVKCSGPGLGTGVRARVPQTFTVDCSQAGRAPLQVAVLGPTGVAEPVEVRDNGDGTHTVHYTPATDGPYTVAVKYADQEVPRSPFKIKVLPSHDASKVRASGPGLNASGIPASLPVEFTIDARDAGQGLLTVQILDPEGKPKKANIRDNGDGTYTVSYLPDMSGRYTITIKYGGDEIPYSPFRIHALPTGDASKCLVTVSIGGHGLGACLGPRIQIGEETVITVDAKAAGKGKVTCTVSTPDGAELDVDVVENHDGTFDIYYTAPEPGKYVITIRFGGEHIPNSPFHVLACDPLPHVEEPAEMLQMRQPYAPLRPGTCPTHWATEEPVVPVEPLESMLRPFNLVIPFTVQKGELTGEVRMPSGKTARPNITDNKDGTITVRYAPTEKGLHQMGIKYDGNHIPGSPLQFYVDAINSRHVSAYGPGLSHGMVNKPATFTIVTKDAGEGGLSLAVEGPSKAEITCKDNKDGTCTVSYLPTAPGDYSIIVRFDDKHIPGSPFTAKITGDDSMRTSQLNVGTSTDVSLKITEGDLSQLTASIRAPSGNEEPCLLKRLPNRHIGISFTPKEVGEHVVSVRKSGKHVTNSPFKILVGPSEIGDASKVRVWGKGLSEGQTFQVAEFIVDTRNAGYGGLGLSIEGPSKVDINCEDMEDGTCKVTYCPTEPGTYIINIKFADKHVPGSPFTVKVTGEGRMKESITRRRQAPSIATIGSTCDLNLKIPGNWFQMVSAQERLTRTFTRSSHTYTRTERTEISKTRGGETKREVRVEESTQVGGDPFPAVFGDFLGRERLGSFGSITRQQEGEASSQDMTAQVTSPSGKTEAAEIVEGEDSAYSVRFVPQEMGPHTVTVKYRGQHVPGSPFQFTVGPLGEGGAHKVRAGGTGLERGVAGVPAEFSIWTREAGAGGLSIAVEGPSKAEIAFEDRKDGSCGVSYVVQEPGDYEVSIKFNDEHIPDSPFVVPVASLSDDARRLTVTSLQETGLKVNQPASFAVQLNGARGVIDARVHTPSGAVEECYVSELDSDKHTIRFIPHENGVHSIDVKFNGAHIPGSPFKIRVGEQSQAGDPGLVSAYGPGLEGGTTGVSSEFIVNTQNAGSGALSVTIDGPSKVQLDCRECPEGHVVTYTPMAPGNYLIAIKYGGPQHIVGSPFKAKVTGPRLSGGHSLHETSTVLVETVTKSSSSRGASYSSIPKFSSDASKVVTRGPGLSQAFVGQKNSFTVDCSKAGTNMMMVGVHGPKTPCEEVYVKHMGNRVYNVTYTVKEKGDYILIVKWGDESVPGSPFKVNVP</sequence>
<gene>
    <name type="primary">Flnc</name>
    <name type="synonym">Abpl</name>
    <name type="synonym">Fln2</name>
</gene>
<organism>
    <name type="scientific">Mus musculus</name>
    <name type="common">Mouse</name>
    <dbReference type="NCBI Taxonomy" id="10090"/>
    <lineage>
        <taxon>Eukaryota</taxon>
        <taxon>Metazoa</taxon>
        <taxon>Chordata</taxon>
        <taxon>Craniata</taxon>
        <taxon>Vertebrata</taxon>
        <taxon>Euteleostomi</taxon>
        <taxon>Mammalia</taxon>
        <taxon>Eutheria</taxon>
        <taxon>Euarchontoglires</taxon>
        <taxon>Glires</taxon>
        <taxon>Rodentia</taxon>
        <taxon>Myomorpha</taxon>
        <taxon>Muroidea</taxon>
        <taxon>Muridae</taxon>
        <taxon>Murinae</taxon>
        <taxon>Mus</taxon>
        <taxon>Mus</taxon>
    </lineage>
</organism>
<evidence type="ECO:0000250" key="1"/>
<evidence type="ECO:0000250" key="2">
    <source>
        <dbReference type="UniProtKB" id="Q14315"/>
    </source>
</evidence>
<evidence type="ECO:0000255" key="3">
    <source>
        <dbReference type="PROSITE-ProRule" id="PRU00044"/>
    </source>
</evidence>
<evidence type="ECO:0000255" key="4">
    <source>
        <dbReference type="PROSITE-ProRule" id="PRU00087"/>
    </source>
</evidence>
<evidence type="ECO:0000256" key="5">
    <source>
        <dbReference type="SAM" id="MobiDB-lite"/>
    </source>
</evidence>
<evidence type="ECO:0000269" key="6">
    <source>
    </source>
</evidence>
<evidence type="ECO:0000269" key="7">
    <source>
    </source>
</evidence>
<evidence type="ECO:0000303" key="8">
    <source>
    </source>
</evidence>
<evidence type="ECO:0000303" key="9">
    <source>
    </source>
</evidence>
<evidence type="ECO:0000305" key="10"/>
<evidence type="ECO:0007744" key="11">
    <source>
    </source>
</evidence>
<evidence type="ECO:0007744" key="12">
    <source>
    </source>
</evidence>
<reference key="1">
    <citation type="journal article" date="2009" name="PLoS Biol.">
        <title>Lineage-specific biology revealed by a finished genome assembly of the mouse.</title>
        <authorList>
            <person name="Church D.M."/>
            <person name="Goodstadt L."/>
            <person name="Hillier L.W."/>
            <person name="Zody M.C."/>
            <person name="Goldstein S."/>
            <person name="She X."/>
            <person name="Bult C.J."/>
            <person name="Agarwala R."/>
            <person name="Cherry J.L."/>
            <person name="DiCuccio M."/>
            <person name="Hlavina W."/>
            <person name="Kapustin Y."/>
            <person name="Meric P."/>
            <person name="Maglott D."/>
            <person name="Birtle Z."/>
            <person name="Marques A.C."/>
            <person name="Graves T."/>
            <person name="Zhou S."/>
            <person name="Teague B."/>
            <person name="Potamousis K."/>
            <person name="Churas C."/>
            <person name="Place M."/>
            <person name="Herschleb J."/>
            <person name="Runnheim R."/>
            <person name="Forrest D."/>
            <person name="Amos-Landgraf J."/>
            <person name="Schwartz D.C."/>
            <person name="Cheng Z."/>
            <person name="Lindblad-Toh K."/>
            <person name="Eichler E.E."/>
            <person name="Ponting C.P."/>
        </authorList>
    </citation>
    <scope>NUCLEOTIDE SEQUENCE [LARGE SCALE GENOMIC DNA]</scope>
    <source>
        <strain>C57BL/6J</strain>
    </source>
</reference>
<reference key="2">
    <citation type="journal article" date="2004" name="Genome Res.">
        <title>The status, quality, and expansion of the NIH full-length cDNA project: the Mammalian Gene Collection (MGC).</title>
        <authorList>
            <consortium name="The MGC Project Team"/>
        </authorList>
    </citation>
    <scope>NUCLEOTIDE SEQUENCE [LARGE SCALE MRNA] (ISOFORMS 1 AND 2)</scope>
    <source>
        <strain>C57BL/6J</strain>
        <tissue>Brain</tissue>
        <tissue>Embryo</tissue>
    </source>
</reference>
<reference key="3">
    <citation type="journal article" date="2002" name="J. Cell Biol.">
        <title>Different splice variants of filamin-B affect myogenesis, subcellular distribution, and determine binding to integrin (beta) subunits.</title>
        <authorList>
            <person name="van Der Flier A."/>
            <person name="Kuikman I."/>
            <person name="Kramer D."/>
            <person name="Geerts D."/>
            <person name="Kreft M."/>
            <person name="Takafuta T."/>
            <person name="Shapiro S.S."/>
            <person name="Sonnenberg A."/>
        </authorList>
    </citation>
    <scope>NUCLEOTIDE SEQUENCE [MRNA] OF 1687-1800 (ISOFORMS 1 AND 2)</scope>
    <scope>DEVELOPMENTAL STAGE</scope>
    <source>
        <strain>C3H/HeJ</strain>
    </source>
</reference>
<reference key="4">
    <citation type="journal article" date="2000" name="Dev. Dyn.">
        <title>Filamin isogene expression during mouse myogenesis.</title>
        <authorList>
            <person name="Chiang W."/>
            <person name="Greaser M.L."/>
            <person name="Lyons G.E."/>
        </authorList>
    </citation>
    <scope>NUCLEOTIDE SEQUENCE [MRNA] OF 2535-2726</scope>
    <source>
        <strain>C3H/HeJ</strain>
        <tissue>Myotube</tissue>
    </source>
</reference>
<reference key="5">
    <citation type="journal article" date="2004" name="Hum. Mol. Genet.">
        <title>Filamin C interacts with the muscular dystrophy KY protein and is abnormally distributed in mouse KY deficient muscle fibres.</title>
        <authorList>
            <person name="Beatham J."/>
            <person name="Romero R."/>
            <person name="Townsend S.K.M."/>
            <person name="Hacker T."/>
            <person name="van der Ven P.F.M."/>
            <person name="Blanco G."/>
        </authorList>
    </citation>
    <scope>INTERACTION WITH KY</scope>
</reference>
<reference key="6">
    <citation type="journal article" date="2006" name="Mol. Cell. Biol.">
        <title>Loss of FilaminC (FLNc) results in severe defects in myogenesis and myotube structure.</title>
        <authorList>
            <person name="Dalkilic I."/>
            <person name="Schienda J."/>
            <person name="Thompson T.G."/>
            <person name="Kunkel L.M."/>
        </authorList>
    </citation>
    <scope>FUNCTION</scope>
</reference>
<reference key="7">
    <citation type="journal article" date="2009" name="Mol. Cell. Proteomics">
        <title>Large scale localization of protein phosphorylation by use of electron capture dissociation mass spectrometry.</title>
        <authorList>
            <person name="Sweet S.M."/>
            <person name="Bailey C.M."/>
            <person name="Cunningham D.L."/>
            <person name="Heath J.K."/>
            <person name="Cooper H.J."/>
        </authorList>
    </citation>
    <scope>PHOSPHORYLATION [LARGE SCALE ANALYSIS] AT SER-2234</scope>
    <scope>IDENTIFICATION BY MASS SPECTROMETRY [LARGE SCALE ANALYSIS]</scope>
    <source>
        <tissue>Embryonic fibroblast</tissue>
    </source>
</reference>
<reference key="8">
    <citation type="journal article" date="2010" name="Cell">
        <title>A tissue-specific atlas of mouse protein phosphorylation and expression.</title>
        <authorList>
            <person name="Huttlin E.L."/>
            <person name="Jedrychowski M.P."/>
            <person name="Elias J.E."/>
            <person name="Goswami T."/>
            <person name="Rad R."/>
            <person name="Beausoleil S.A."/>
            <person name="Villen J."/>
            <person name="Haas W."/>
            <person name="Sowa M.E."/>
            <person name="Gygi S.P."/>
        </authorList>
    </citation>
    <scope>IDENTIFICATION BY MASS SPECTROMETRY [LARGE SCALE ANALYSIS]</scope>
    <source>
        <tissue>Brain</tissue>
        <tissue>Brown adipose tissue</tissue>
        <tissue>Heart</tissue>
        <tissue>Kidney</tissue>
        <tissue>Lung</tissue>
        <tissue>Pancreas</tissue>
        <tissue>Spleen</tissue>
        <tissue>Testis</tissue>
    </source>
</reference>
<reference key="9">
    <citation type="journal article" date="2010" name="Exp. Cell Res.">
        <title>Identification of a Z-band associated protein complex involving KY, FLNC and IGFN1.</title>
        <authorList>
            <person name="Baker J."/>
            <person name="Riley G."/>
            <person name="Romero M.R."/>
            <person name="Haynes A.R."/>
            <person name="Hilton H."/>
            <person name="Simon M."/>
            <person name="Hancock J."/>
            <person name="Tateossian H."/>
            <person name="Ripoll V.M."/>
            <person name="Blanco G."/>
        </authorList>
    </citation>
    <scope>INTERACTION WITH IGFN1</scope>
</reference>
<reference key="10">
    <citation type="journal article" date="2013" name="Genes Cells">
        <title>Junctional Rab13-binding protein (JRAB) regulates cell spreading via filamins.</title>
        <authorList>
            <person name="Sakane A."/>
            <person name="Alamir Mahmoud Abdallah A."/>
            <person name="Nakano K."/>
            <person name="Honda K."/>
            <person name="Kitamura T."/>
            <person name="Imoto I."/>
            <person name="Matsushita N."/>
            <person name="Sasaki T."/>
        </authorList>
    </citation>
    <scope>INTERACTION WITH MICALL2</scope>
</reference>
<reference key="11">
    <citation type="journal article" date="2014" name="Mol. Cell. Proteomics">
        <title>Immunoaffinity enrichment and mass spectrometry analysis of protein methylation.</title>
        <authorList>
            <person name="Guo A."/>
            <person name="Gu H."/>
            <person name="Zhou J."/>
            <person name="Mulhern D."/>
            <person name="Wang Y."/>
            <person name="Lee K.A."/>
            <person name="Yang V."/>
            <person name="Aguiar M."/>
            <person name="Kornhauser J."/>
            <person name="Jia X."/>
            <person name="Ren J."/>
            <person name="Beausoleil S.A."/>
            <person name="Silva J.C."/>
            <person name="Vemulapalli V."/>
            <person name="Bedford M.T."/>
            <person name="Comb M.J."/>
        </authorList>
    </citation>
    <scope>METHYLATION [LARGE SCALE ANALYSIS] AT ARG-1003</scope>
    <scope>IDENTIFICATION BY MASS SPECTROMETRY [LARGE SCALE ANALYSIS]</scope>
    <source>
        <tissue>Brain</tissue>
    </source>
</reference>
<dbReference type="EMBL" id="AC044807">
    <property type="status" value="NOT_ANNOTATED_CDS"/>
    <property type="molecule type" value="Genomic_DNA"/>
</dbReference>
<dbReference type="EMBL" id="BC052186">
    <property type="protein sequence ID" value="AAH52186.1"/>
    <property type="molecule type" value="mRNA"/>
</dbReference>
<dbReference type="EMBL" id="BC060276">
    <property type="protein sequence ID" value="AAH60276.1"/>
    <property type="molecule type" value="mRNA"/>
</dbReference>
<dbReference type="EMBL" id="BC151097">
    <property type="protein sequence ID" value="AAI51098.1"/>
    <property type="molecule type" value="mRNA"/>
</dbReference>
<dbReference type="EMBL" id="BC158128">
    <property type="protein sequence ID" value="AAI58129.1"/>
    <property type="molecule type" value="mRNA"/>
</dbReference>
<dbReference type="EMBL" id="AF353670">
    <property type="protein sequence ID" value="AAL68446.1"/>
    <property type="molecule type" value="mRNA"/>
</dbReference>
<dbReference type="EMBL" id="AF119148">
    <property type="protein sequence ID" value="AAF97411.1"/>
    <property type="molecule type" value="mRNA"/>
</dbReference>
<dbReference type="CCDS" id="CCDS39452.1">
    <molecule id="Q8VHX6-1"/>
</dbReference>
<dbReference type="CCDS" id="CCDS80503.1">
    <molecule id="Q8VHX6-2"/>
</dbReference>
<dbReference type="RefSeq" id="NP_001074654.1">
    <molecule id="Q8VHX6-1"/>
    <property type="nucleotide sequence ID" value="NM_001081185.2"/>
</dbReference>
<dbReference type="RefSeq" id="NP_001298003.1">
    <molecule id="Q8VHX6-2"/>
    <property type="nucleotide sequence ID" value="NM_001311074.2"/>
</dbReference>
<dbReference type="SMR" id="Q8VHX6"/>
<dbReference type="BioGRID" id="213053">
    <property type="interactions" value="18"/>
</dbReference>
<dbReference type="CORUM" id="Q8VHX6"/>
<dbReference type="FunCoup" id="Q8VHX6">
    <property type="interactions" value="818"/>
</dbReference>
<dbReference type="IntAct" id="Q8VHX6">
    <property type="interactions" value="10"/>
</dbReference>
<dbReference type="MINT" id="Q8VHX6"/>
<dbReference type="STRING" id="10090.ENSMUSP00000064163"/>
<dbReference type="GlyGen" id="Q8VHX6">
    <property type="glycosylation" value="1 site, 1 O-linked glycan (1 site)"/>
</dbReference>
<dbReference type="iPTMnet" id="Q8VHX6"/>
<dbReference type="PhosphoSitePlus" id="Q8VHX6"/>
<dbReference type="SwissPalm" id="Q8VHX6"/>
<dbReference type="jPOST" id="Q8VHX6"/>
<dbReference type="PaxDb" id="10090-ENSMUSP00000064163"/>
<dbReference type="PeptideAtlas" id="Q8VHX6"/>
<dbReference type="ProteomicsDB" id="267483">
    <molecule id="Q8VHX6-1"/>
</dbReference>
<dbReference type="ProteomicsDB" id="267484">
    <molecule id="Q8VHX6-2"/>
</dbReference>
<dbReference type="Pumba" id="Q8VHX6"/>
<dbReference type="Antibodypedia" id="1492">
    <property type="antibodies" value="145 antibodies from 21 providers"/>
</dbReference>
<dbReference type="Ensembl" id="ENSMUST00000065090.8">
    <molecule id="Q8VHX6-1"/>
    <property type="protein sequence ID" value="ENSMUSP00000064163.7"/>
    <property type="gene ID" value="ENSMUSG00000068699.13"/>
</dbReference>
<dbReference type="Ensembl" id="ENSMUST00000101617.9">
    <molecule id="Q8VHX6-2"/>
    <property type="protein sequence ID" value="ENSMUSP00000099139.4"/>
    <property type="gene ID" value="ENSMUSG00000068699.13"/>
</dbReference>
<dbReference type="GeneID" id="68794"/>
<dbReference type="KEGG" id="mmu:68794"/>
<dbReference type="UCSC" id="uc009bdn.1">
    <molecule id="Q8VHX6-1"/>
    <property type="organism name" value="mouse"/>
</dbReference>
<dbReference type="UCSC" id="uc009bdo.2">
    <molecule id="Q8VHX6-2"/>
    <property type="organism name" value="mouse"/>
</dbReference>
<dbReference type="AGR" id="MGI:95557"/>
<dbReference type="CTD" id="2318"/>
<dbReference type="MGI" id="MGI:95557">
    <property type="gene designation" value="Flnc"/>
</dbReference>
<dbReference type="VEuPathDB" id="HostDB:ENSMUSG00000068699"/>
<dbReference type="eggNOG" id="KOG0518">
    <property type="taxonomic scope" value="Eukaryota"/>
</dbReference>
<dbReference type="GeneTree" id="ENSGT00940000153588"/>
<dbReference type="InParanoid" id="Q8VHX6"/>
<dbReference type="OMA" id="YPVMAGK"/>
<dbReference type="OrthoDB" id="5334309at2759"/>
<dbReference type="PhylomeDB" id="Q8VHX6"/>
<dbReference type="Reactome" id="R-MMU-446353">
    <property type="pathway name" value="Cell-extracellular matrix interactions"/>
</dbReference>
<dbReference type="BioGRID-ORCS" id="68794">
    <property type="hits" value="2 hits in 76 CRISPR screens"/>
</dbReference>
<dbReference type="ChiTaRS" id="Flnc">
    <property type="organism name" value="mouse"/>
</dbReference>
<dbReference type="PRO" id="PR:Q8VHX6"/>
<dbReference type="Proteomes" id="UP000000589">
    <property type="component" value="Chromosome 6"/>
</dbReference>
<dbReference type="RNAct" id="Q8VHX6">
    <property type="molecule type" value="protein"/>
</dbReference>
<dbReference type="Bgee" id="ENSMUSG00000068699">
    <property type="expression patterns" value="Expressed in hindlimb stylopod muscle and 162 other cell types or tissues"/>
</dbReference>
<dbReference type="GO" id="GO:0015629">
    <property type="term" value="C:actin cytoskeleton"/>
    <property type="evidence" value="ECO:0000304"/>
    <property type="project" value="MGI"/>
</dbReference>
<dbReference type="GO" id="GO:0005829">
    <property type="term" value="C:cytosol"/>
    <property type="evidence" value="ECO:0007669"/>
    <property type="project" value="Ensembl"/>
</dbReference>
<dbReference type="GO" id="GO:0045171">
    <property type="term" value="C:intercellular bridge"/>
    <property type="evidence" value="ECO:0007669"/>
    <property type="project" value="Ensembl"/>
</dbReference>
<dbReference type="GO" id="GO:0042383">
    <property type="term" value="C:sarcolemma"/>
    <property type="evidence" value="ECO:0007669"/>
    <property type="project" value="Ensembl"/>
</dbReference>
<dbReference type="GO" id="GO:0016528">
    <property type="term" value="C:sarcoplasm"/>
    <property type="evidence" value="ECO:0007669"/>
    <property type="project" value="Ensembl"/>
</dbReference>
<dbReference type="GO" id="GO:0030018">
    <property type="term" value="C:Z disc"/>
    <property type="evidence" value="ECO:0007669"/>
    <property type="project" value="UniProtKB-SubCell"/>
</dbReference>
<dbReference type="GO" id="GO:0003779">
    <property type="term" value="F:actin binding"/>
    <property type="evidence" value="ECO:0000304"/>
    <property type="project" value="MGI"/>
</dbReference>
<dbReference type="GO" id="GO:0051015">
    <property type="term" value="F:actin filament binding"/>
    <property type="evidence" value="ECO:0007669"/>
    <property type="project" value="InterPro"/>
</dbReference>
<dbReference type="GO" id="GO:0030506">
    <property type="term" value="F:ankyrin binding"/>
    <property type="evidence" value="ECO:0007669"/>
    <property type="project" value="Ensembl"/>
</dbReference>
<dbReference type="GO" id="GO:0030029">
    <property type="term" value="P:actin filament-based process"/>
    <property type="evidence" value="ECO:0000304"/>
    <property type="project" value="MGI"/>
</dbReference>
<dbReference type="GO" id="GO:0055001">
    <property type="term" value="P:muscle cell development"/>
    <property type="evidence" value="ECO:0000314"/>
    <property type="project" value="UniProtKB"/>
</dbReference>
<dbReference type="GO" id="GO:0045214">
    <property type="term" value="P:sarcomere organization"/>
    <property type="evidence" value="ECO:0000250"/>
    <property type="project" value="UniProtKB"/>
</dbReference>
<dbReference type="CDD" id="cd21310">
    <property type="entry name" value="CH_FLNC_rpt1"/>
    <property type="match status" value="1"/>
</dbReference>
<dbReference type="CDD" id="cd21314">
    <property type="entry name" value="CH_FLNC_rpt2"/>
    <property type="match status" value="1"/>
</dbReference>
<dbReference type="CDD" id="cd00173">
    <property type="entry name" value="SH2"/>
    <property type="match status" value="1"/>
</dbReference>
<dbReference type="FunFam" id="1.10.418.10:FF:000006">
    <property type="entry name" value="Filamin-B isoform A"/>
    <property type="match status" value="1"/>
</dbReference>
<dbReference type="FunFam" id="2.60.40.10:FF:000042">
    <property type="entry name" value="Filamin-B isoform B"/>
    <property type="match status" value="2"/>
</dbReference>
<dbReference type="FunFam" id="2.60.40.10:FF:000092">
    <property type="entry name" value="Filamin-B isoform B"/>
    <property type="match status" value="1"/>
</dbReference>
<dbReference type="FunFam" id="1.10.418.10:FF:000008">
    <property type="entry name" value="Filamin-B isoform C"/>
    <property type="match status" value="1"/>
</dbReference>
<dbReference type="FunFam" id="2.60.40.10:FF:000007">
    <property type="entry name" value="Filamin-B isoform C"/>
    <property type="match status" value="3"/>
</dbReference>
<dbReference type="FunFam" id="2.60.40.10:FF:000079">
    <property type="entry name" value="Filamin-B isoform C"/>
    <property type="match status" value="1"/>
</dbReference>
<dbReference type="FunFam" id="2.60.40.10:FF:000125">
    <property type="entry name" value="filamin-B isoform X1"/>
    <property type="match status" value="1"/>
</dbReference>
<dbReference type="FunFam" id="2.60.40.10:FF:000138">
    <property type="entry name" value="filamin-B isoform X1"/>
    <property type="match status" value="1"/>
</dbReference>
<dbReference type="FunFam" id="2.60.40.10:FF:000154">
    <property type="entry name" value="filamin-B isoform X1"/>
    <property type="match status" value="1"/>
</dbReference>
<dbReference type="FunFam" id="2.60.40.10:FF:000102">
    <property type="entry name" value="filamin-B isoform X2"/>
    <property type="match status" value="1"/>
</dbReference>
<dbReference type="FunFam" id="2.60.40.10:FF:000001">
    <property type="entry name" value="Filamin-C isoform b"/>
    <property type="match status" value="5"/>
</dbReference>
<dbReference type="FunFam" id="2.60.40.10:FF:000105">
    <property type="entry name" value="filamin-C isoform X1"/>
    <property type="match status" value="1"/>
</dbReference>
<dbReference type="FunFam" id="2.60.40.10:FF:000115">
    <property type="entry name" value="filamin-C isoform X1"/>
    <property type="match status" value="1"/>
</dbReference>
<dbReference type="FunFam" id="2.60.40.10:FF:000126">
    <property type="entry name" value="filamin-C isoform X1"/>
    <property type="match status" value="1"/>
</dbReference>
<dbReference type="FunFam" id="2.60.40.10:FF:000157">
    <property type="entry name" value="filamin-C isoform X1"/>
    <property type="match status" value="1"/>
</dbReference>
<dbReference type="FunFam" id="2.60.40.10:FF:000096">
    <property type="entry name" value="filamin-C isoform X2"/>
    <property type="match status" value="1"/>
</dbReference>
<dbReference type="FunFam" id="2.60.40.10:FF:000118">
    <property type="entry name" value="filamin-C isoform X2"/>
    <property type="match status" value="1"/>
</dbReference>
<dbReference type="FunFam" id="2.60.40.10:FF:000122">
    <property type="entry name" value="filamin-C isoform X2"/>
    <property type="match status" value="1"/>
</dbReference>
<dbReference type="FunFam" id="2.60.40.10:FF:000168">
    <property type="entry name" value="filamin-C isoform X2"/>
    <property type="match status" value="1"/>
</dbReference>
<dbReference type="Gene3D" id="1.10.418.10">
    <property type="entry name" value="Calponin-like domain"/>
    <property type="match status" value="2"/>
</dbReference>
<dbReference type="Gene3D" id="2.60.40.10">
    <property type="entry name" value="Immunoglobulins"/>
    <property type="match status" value="24"/>
</dbReference>
<dbReference type="InterPro" id="IPR001589">
    <property type="entry name" value="Actinin_actin-bd_CS"/>
</dbReference>
<dbReference type="InterPro" id="IPR001715">
    <property type="entry name" value="CH_dom"/>
</dbReference>
<dbReference type="InterPro" id="IPR036872">
    <property type="entry name" value="CH_dom_sf"/>
</dbReference>
<dbReference type="InterPro" id="IPR044801">
    <property type="entry name" value="Filamin"/>
</dbReference>
<dbReference type="InterPro" id="IPR017868">
    <property type="entry name" value="Filamin/ABP280_repeat-like"/>
</dbReference>
<dbReference type="InterPro" id="IPR001298">
    <property type="entry name" value="Filamin/ABP280_rpt"/>
</dbReference>
<dbReference type="InterPro" id="IPR013783">
    <property type="entry name" value="Ig-like_fold"/>
</dbReference>
<dbReference type="InterPro" id="IPR014756">
    <property type="entry name" value="Ig_E-set"/>
</dbReference>
<dbReference type="PANTHER" id="PTHR38537:SF8">
    <property type="entry name" value="FILAMIN-A"/>
    <property type="match status" value="1"/>
</dbReference>
<dbReference type="PANTHER" id="PTHR38537">
    <property type="entry name" value="JITTERBUG, ISOFORM N"/>
    <property type="match status" value="1"/>
</dbReference>
<dbReference type="Pfam" id="PF00307">
    <property type="entry name" value="CH"/>
    <property type="match status" value="2"/>
</dbReference>
<dbReference type="Pfam" id="PF00630">
    <property type="entry name" value="Filamin"/>
    <property type="match status" value="24"/>
</dbReference>
<dbReference type="SMART" id="SM00033">
    <property type="entry name" value="CH"/>
    <property type="match status" value="2"/>
</dbReference>
<dbReference type="SMART" id="SM00557">
    <property type="entry name" value="IG_FLMN"/>
    <property type="match status" value="24"/>
</dbReference>
<dbReference type="SUPFAM" id="SSF47576">
    <property type="entry name" value="Calponin-homology domain, CH-domain"/>
    <property type="match status" value="1"/>
</dbReference>
<dbReference type="SUPFAM" id="SSF81296">
    <property type="entry name" value="E set domains"/>
    <property type="match status" value="24"/>
</dbReference>
<dbReference type="PROSITE" id="PS00019">
    <property type="entry name" value="ACTININ_1"/>
    <property type="match status" value="1"/>
</dbReference>
<dbReference type="PROSITE" id="PS00020">
    <property type="entry name" value="ACTININ_2"/>
    <property type="match status" value="1"/>
</dbReference>
<dbReference type="PROSITE" id="PS50021">
    <property type="entry name" value="CH"/>
    <property type="match status" value="2"/>
</dbReference>
<dbReference type="PROSITE" id="PS50194">
    <property type="entry name" value="FILAMIN_REPEAT"/>
    <property type="match status" value="24"/>
</dbReference>